<protein>
    <recommendedName>
        <fullName evidence="1">4-hydroxy-tetrahydrodipicolinate reductase</fullName>
        <shortName evidence="1">HTPA reductase</shortName>
        <ecNumber evidence="1">1.17.1.8</ecNumber>
    </recommendedName>
</protein>
<sequence>MLNIGLSGSTGKMGGTILERIDKFKDCKIAAKFNSTNNLDDLDNFCKNSDVIIDFSTPEILEKLINYALKHNTKLVIGTTGLQPQHFKLLEKAAQTLPVLYSANMSIGANLLSYLAKEVTKILDDYDVEILETHHRNKKDSPSGTAVMLAETIASKKGLNITFNRGNRLRSEKEIGISSLRGGNVHGIHEISFLGDDEIITLKHEALNKNSFSIGAIKAAIWLQDKPSALYSMQDIYKI</sequence>
<feature type="chain" id="PRO_1000202816" description="4-hydroxy-tetrahydrodipicolinate reductase">
    <location>
        <begin position="1"/>
        <end position="239"/>
    </location>
</feature>
<feature type="active site" description="Proton donor/acceptor" evidence="1">
    <location>
        <position position="134"/>
    </location>
</feature>
<feature type="active site" description="Proton donor" evidence="1">
    <location>
        <position position="138"/>
    </location>
</feature>
<feature type="binding site" evidence="1">
    <location>
        <begin position="8"/>
        <end position="13"/>
    </location>
    <ligand>
        <name>NAD(+)</name>
        <dbReference type="ChEBI" id="CHEBI:57540"/>
    </ligand>
</feature>
<feature type="binding site" evidence="1">
    <location>
        <begin position="78"/>
        <end position="80"/>
    </location>
    <ligand>
        <name>NAD(+)</name>
        <dbReference type="ChEBI" id="CHEBI:57540"/>
    </ligand>
</feature>
<feature type="binding site" evidence="1">
    <location>
        <begin position="102"/>
        <end position="105"/>
    </location>
    <ligand>
        <name>NAD(+)</name>
        <dbReference type="ChEBI" id="CHEBI:57540"/>
    </ligand>
</feature>
<feature type="binding site" evidence="1">
    <location>
        <position position="135"/>
    </location>
    <ligand>
        <name>(S)-2,3,4,5-tetrahydrodipicolinate</name>
        <dbReference type="ChEBI" id="CHEBI:16845"/>
    </ligand>
</feature>
<feature type="binding site" evidence="1">
    <location>
        <begin position="144"/>
        <end position="145"/>
    </location>
    <ligand>
        <name>(S)-2,3,4,5-tetrahydrodipicolinate</name>
        <dbReference type="ChEBI" id="CHEBI:16845"/>
    </ligand>
</feature>
<name>DAPB_RICAE</name>
<proteinExistence type="inferred from homology"/>
<gene>
    <name evidence="1" type="primary">dapB</name>
    <name type="ordered locus">RAF_ORF0179</name>
</gene>
<accession>C3PMI6</accession>
<reference key="1">
    <citation type="journal article" date="2009" name="BMC Genomics">
        <title>Analysis of the Rickettsia africae genome reveals that virulence acquisition in Rickettsia species may be explained by genome reduction.</title>
        <authorList>
            <person name="Fournier P.-E."/>
            <person name="El Karkouri K."/>
            <person name="Leroy Q."/>
            <person name="Robert C."/>
            <person name="Giumelli B."/>
            <person name="Renesto P."/>
            <person name="Socolovschi C."/>
            <person name="Parola P."/>
            <person name="Audic S."/>
            <person name="Raoult D."/>
        </authorList>
    </citation>
    <scope>NUCLEOTIDE SEQUENCE [LARGE SCALE GENOMIC DNA]</scope>
    <source>
        <strain>ESF-5</strain>
    </source>
</reference>
<comment type="function">
    <text evidence="1">Catalyzes the conversion of 4-hydroxy-tetrahydrodipicolinate (HTPA) to tetrahydrodipicolinate.</text>
</comment>
<comment type="catalytic activity">
    <reaction evidence="1">
        <text>(S)-2,3,4,5-tetrahydrodipicolinate + NAD(+) + H2O = (2S,4S)-4-hydroxy-2,3,4,5-tetrahydrodipicolinate + NADH + H(+)</text>
        <dbReference type="Rhea" id="RHEA:35323"/>
        <dbReference type="ChEBI" id="CHEBI:15377"/>
        <dbReference type="ChEBI" id="CHEBI:15378"/>
        <dbReference type="ChEBI" id="CHEBI:16845"/>
        <dbReference type="ChEBI" id="CHEBI:57540"/>
        <dbReference type="ChEBI" id="CHEBI:57945"/>
        <dbReference type="ChEBI" id="CHEBI:67139"/>
        <dbReference type="EC" id="1.17.1.8"/>
    </reaction>
</comment>
<comment type="catalytic activity">
    <reaction evidence="1">
        <text>(S)-2,3,4,5-tetrahydrodipicolinate + NADP(+) + H2O = (2S,4S)-4-hydroxy-2,3,4,5-tetrahydrodipicolinate + NADPH + H(+)</text>
        <dbReference type="Rhea" id="RHEA:35331"/>
        <dbReference type="ChEBI" id="CHEBI:15377"/>
        <dbReference type="ChEBI" id="CHEBI:15378"/>
        <dbReference type="ChEBI" id="CHEBI:16845"/>
        <dbReference type="ChEBI" id="CHEBI:57783"/>
        <dbReference type="ChEBI" id="CHEBI:58349"/>
        <dbReference type="ChEBI" id="CHEBI:67139"/>
        <dbReference type="EC" id="1.17.1.8"/>
    </reaction>
</comment>
<comment type="pathway">
    <text evidence="1">Amino-acid biosynthesis; L-lysine biosynthesis via DAP pathway; (S)-tetrahydrodipicolinate from L-aspartate: step 4/4.</text>
</comment>
<comment type="subcellular location">
    <subcellularLocation>
        <location evidence="1">Cytoplasm</location>
    </subcellularLocation>
</comment>
<comment type="similarity">
    <text evidence="1">Belongs to the DapB family.</text>
</comment>
<comment type="caution">
    <text evidence="2">Was originally thought to be a dihydrodipicolinate reductase (DHDPR), catalyzing the conversion of dihydrodipicolinate to tetrahydrodipicolinate. However, it was shown in E.coli that the substrate of the enzymatic reaction is not dihydrodipicolinate (DHDP) but in fact (2S,4S)-4-hydroxy-2,3,4,5-tetrahydrodipicolinic acid (HTPA), the product released by the DapA-catalyzed reaction.</text>
</comment>
<keyword id="KW-0028">Amino-acid biosynthesis</keyword>
<keyword id="KW-0963">Cytoplasm</keyword>
<keyword id="KW-0220">Diaminopimelate biosynthesis</keyword>
<keyword id="KW-0457">Lysine biosynthesis</keyword>
<keyword id="KW-0520">NAD</keyword>
<keyword id="KW-0521">NADP</keyword>
<keyword id="KW-0560">Oxidoreductase</keyword>
<evidence type="ECO:0000255" key="1">
    <source>
        <dbReference type="HAMAP-Rule" id="MF_00102"/>
    </source>
</evidence>
<evidence type="ECO:0000305" key="2"/>
<dbReference type="EC" id="1.17.1.8" evidence="1"/>
<dbReference type="EMBL" id="CP001612">
    <property type="protein sequence ID" value="ACP53146.1"/>
    <property type="molecule type" value="Genomic_DNA"/>
</dbReference>
<dbReference type="RefSeq" id="WP_012719418.1">
    <property type="nucleotide sequence ID" value="NC_012633.1"/>
</dbReference>
<dbReference type="SMR" id="C3PMI6"/>
<dbReference type="KEGG" id="raf:RAF_ORF0179"/>
<dbReference type="HOGENOM" id="CLU_047479_2_2_5"/>
<dbReference type="UniPathway" id="UPA00034">
    <property type="reaction ID" value="UER00018"/>
</dbReference>
<dbReference type="Proteomes" id="UP000002305">
    <property type="component" value="Chromosome"/>
</dbReference>
<dbReference type="GO" id="GO:0005829">
    <property type="term" value="C:cytosol"/>
    <property type="evidence" value="ECO:0007669"/>
    <property type="project" value="TreeGrafter"/>
</dbReference>
<dbReference type="GO" id="GO:0008839">
    <property type="term" value="F:4-hydroxy-tetrahydrodipicolinate reductase"/>
    <property type="evidence" value="ECO:0007669"/>
    <property type="project" value="UniProtKB-EC"/>
</dbReference>
<dbReference type="GO" id="GO:0051287">
    <property type="term" value="F:NAD binding"/>
    <property type="evidence" value="ECO:0007669"/>
    <property type="project" value="UniProtKB-UniRule"/>
</dbReference>
<dbReference type="GO" id="GO:0050661">
    <property type="term" value="F:NADP binding"/>
    <property type="evidence" value="ECO:0007669"/>
    <property type="project" value="UniProtKB-UniRule"/>
</dbReference>
<dbReference type="GO" id="GO:0016726">
    <property type="term" value="F:oxidoreductase activity, acting on CH or CH2 groups, NAD or NADP as acceptor"/>
    <property type="evidence" value="ECO:0007669"/>
    <property type="project" value="UniProtKB-UniRule"/>
</dbReference>
<dbReference type="GO" id="GO:0019877">
    <property type="term" value="P:diaminopimelate biosynthetic process"/>
    <property type="evidence" value="ECO:0007669"/>
    <property type="project" value="UniProtKB-UniRule"/>
</dbReference>
<dbReference type="GO" id="GO:0009089">
    <property type="term" value="P:lysine biosynthetic process via diaminopimelate"/>
    <property type="evidence" value="ECO:0007669"/>
    <property type="project" value="UniProtKB-UniRule"/>
</dbReference>
<dbReference type="CDD" id="cd02274">
    <property type="entry name" value="DHDPR_N"/>
    <property type="match status" value="1"/>
</dbReference>
<dbReference type="Gene3D" id="3.30.360.10">
    <property type="entry name" value="Dihydrodipicolinate Reductase, domain 2"/>
    <property type="match status" value="1"/>
</dbReference>
<dbReference type="Gene3D" id="3.40.50.720">
    <property type="entry name" value="NAD(P)-binding Rossmann-like Domain"/>
    <property type="match status" value="1"/>
</dbReference>
<dbReference type="HAMAP" id="MF_00102">
    <property type="entry name" value="DapB"/>
    <property type="match status" value="1"/>
</dbReference>
<dbReference type="InterPro" id="IPR022663">
    <property type="entry name" value="DapB_C"/>
</dbReference>
<dbReference type="InterPro" id="IPR000846">
    <property type="entry name" value="DapB_N"/>
</dbReference>
<dbReference type="InterPro" id="IPR022664">
    <property type="entry name" value="DapB_N_CS"/>
</dbReference>
<dbReference type="InterPro" id="IPR023940">
    <property type="entry name" value="DHDPR_bac"/>
</dbReference>
<dbReference type="InterPro" id="IPR036291">
    <property type="entry name" value="NAD(P)-bd_dom_sf"/>
</dbReference>
<dbReference type="NCBIfam" id="TIGR00036">
    <property type="entry name" value="dapB"/>
    <property type="match status" value="1"/>
</dbReference>
<dbReference type="PANTHER" id="PTHR20836:SF0">
    <property type="entry name" value="4-HYDROXY-TETRAHYDRODIPICOLINATE REDUCTASE 1, CHLOROPLASTIC-RELATED"/>
    <property type="match status" value="1"/>
</dbReference>
<dbReference type="PANTHER" id="PTHR20836">
    <property type="entry name" value="DIHYDRODIPICOLINATE REDUCTASE"/>
    <property type="match status" value="1"/>
</dbReference>
<dbReference type="Pfam" id="PF05173">
    <property type="entry name" value="DapB_C"/>
    <property type="match status" value="1"/>
</dbReference>
<dbReference type="Pfam" id="PF01113">
    <property type="entry name" value="DapB_N"/>
    <property type="match status" value="1"/>
</dbReference>
<dbReference type="PIRSF" id="PIRSF000161">
    <property type="entry name" value="DHPR"/>
    <property type="match status" value="1"/>
</dbReference>
<dbReference type="SUPFAM" id="SSF55347">
    <property type="entry name" value="Glyceraldehyde-3-phosphate dehydrogenase-like, C-terminal domain"/>
    <property type="match status" value="1"/>
</dbReference>
<dbReference type="SUPFAM" id="SSF51735">
    <property type="entry name" value="NAD(P)-binding Rossmann-fold domains"/>
    <property type="match status" value="1"/>
</dbReference>
<dbReference type="PROSITE" id="PS01298">
    <property type="entry name" value="DAPB"/>
    <property type="match status" value="1"/>
</dbReference>
<organism>
    <name type="scientific">Rickettsia africae (strain ESF-5)</name>
    <dbReference type="NCBI Taxonomy" id="347255"/>
    <lineage>
        <taxon>Bacteria</taxon>
        <taxon>Pseudomonadati</taxon>
        <taxon>Pseudomonadota</taxon>
        <taxon>Alphaproteobacteria</taxon>
        <taxon>Rickettsiales</taxon>
        <taxon>Rickettsiaceae</taxon>
        <taxon>Rickettsieae</taxon>
        <taxon>Rickettsia</taxon>
        <taxon>spotted fever group</taxon>
    </lineage>
</organism>